<keyword id="KW-0030">Aminoacyl-tRNA synthetase</keyword>
<keyword id="KW-0067">ATP-binding</keyword>
<keyword id="KW-0963">Cytoplasm</keyword>
<keyword id="KW-0436">Ligase</keyword>
<keyword id="KW-0547">Nucleotide-binding</keyword>
<keyword id="KW-0648">Protein biosynthesis</keyword>
<keyword id="KW-1185">Reference proteome</keyword>
<accession>Q81XT3</accession>
<accession>Q6HRL1</accession>
<accession>Q6KKX6</accession>
<comment type="function">
    <text evidence="1">Catalyzes the attachment of glycine to tRNA(Gly).</text>
</comment>
<comment type="catalytic activity">
    <reaction evidence="1">
        <text>tRNA(Gly) + glycine + ATP = glycyl-tRNA(Gly) + AMP + diphosphate</text>
        <dbReference type="Rhea" id="RHEA:16013"/>
        <dbReference type="Rhea" id="RHEA-COMP:9664"/>
        <dbReference type="Rhea" id="RHEA-COMP:9683"/>
        <dbReference type="ChEBI" id="CHEBI:30616"/>
        <dbReference type="ChEBI" id="CHEBI:33019"/>
        <dbReference type="ChEBI" id="CHEBI:57305"/>
        <dbReference type="ChEBI" id="CHEBI:78442"/>
        <dbReference type="ChEBI" id="CHEBI:78522"/>
        <dbReference type="ChEBI" id="CHEBI:456215"/>
        <dbReference type="EC" id="6.1.1.14"/>
    </reaction>
</comment>
<comment type="subunit">
    <text evidence="1">Homodimer.</text>
</comment>
<comment type="subcellular location">
    <subcellularLocation>
        <location evidence="1">Cytoplasm</location>
    </subcellularLocation>
</comment>
<comment type="similarity">
    <text evidence="1">Belongs to the class-II aminoacyl-tRNA synthetase family.</text>
</comment>
<reference key="1">
    <citation type="journal article" date="2003" name="Nature">
        <title>The genome sequence of Bacillus anthracis Ames and comparison to closely related bacteria.</title>
        <authorList>
            <person name="Read T.D."/>
            <person name="Peterson S.N."/>
            <person name="Tourasse N.J."/>
            <person name="Baillie L.W."/>
            <person name="Paulsen I.T."/>
            <person name="Nelson K.E."/>
            <person name="Tettelin H."/>
            <person name="Fouts D.E."/>
            <person name="Eisen J.A."/>
            <person name="Gill S.R."/>
            <person name="Holtzapple E.K."/>
            <person name="Okstad O.A."/>
            <person name="Helgason E."/>
            <person name="Rilstone J."/>
            <person name="Wu M."/>
            <person name="Kolonay J.F."/>
            <person name="Beanan M.J."/>
            <person name="Dodson R.J."/>
            <person name="Brinkac L.M."/>
            <person name="Gwinn M.L."/>
            <person name="DeBoy R.T."/>
            <person name="Madpu R."/>
            <person name="Daugherty S.C."/>
            <person name="Durkin A.S."/>
            <person name="Haft D.H."/>
            <person name="Nelson W.C."/>
            <person name="Peterson J.D."/>
            <person name="Pop M."/>
            <person name="Khouri H.M."/>
            <person name="Radune D."/>
            <person name="Benton J.L."/>
            <person name="Mahamoud Y."/>
            <person name="Jiang L."/>
            <person name="Hance I.R."/>
            <person name="Weidman J.F."/>
            <person name="Berry K.J."/>
            <person name="Plaut R.D."/>
            <person name="Wolf A.M."/>
            <person name="Watkins K.L."/>
            <person name="Nierman W.C."/>
            <person name="Hazen A."/>
            <person name="Cline R.T."/>
            <person name="Redmond C."/>
            <person name="Thwaite J.E."/>
            <person name="White O."/>
            <person name="Salzberg S.L."/>
            <person name="Thomason B."/>
            <person name="Friedlander A.M."/>
            <person name="Koehler T.M."/>
            <person name="Hanna P.C."/>
            <person name="Kolstoe A.-B."/>
            <person name="Fraser C.M."/>
        </authorList>
    </citation>
    <scope>NUCLEOTIDE SEQUENCE [LARGE SCALE GENOMIC DNA]</scope>
    <source>
        <strain>Ames / isolate Porton</strain>
    </source>
</reference>
<reference key="2">
    <citation type="journal article" date="2009" name="J. Bacteriol.">
        <title>The complete genome sequence of Bacillus anthracis Ames 'Ancestor'.</title>
        <authorList>
            <person name="Ravel J."/>
            <person name="Jiang L."/>
            <person name="Stanley S.T."/>
            <person name="Wilson M.R."/>
            <person name="Decker R.S."/>
            <person name="Read T.D."/>
            <person name="Worsham P."/>
            <person name="Keim P.S."/>
            <person name="Salzberg S.L."/>
            <person name="Fraser-Liggett C.M."/>
            <person name="Rasko D.A."/>
        </authorList>
    </citation>
    <scope>NUCLEOTIDE SEQUENCE [LARGE SCALE GENOMIC DNA]</scope>
    <source>
        <strain>Ames ancestor</strain>
    </source>
</reference>
<reference key="3">
    <citation type="submission" date="2004-01" db="EMBL/GenBank/DDBJ databases">
        <title>Complete genome sequence of Bacillus anthracis Sterne.</title>
        <authorList>
            <person name="Brettin T.S."/>
            <person name="Bruce D."/>
            <person name="Challacombe J.F."/>
            <person name="Gilna P."/>
            <person name="Han C."/>
            <person name="Hill K."/>
            <person name="Hitchcock P."/>
            <person name="Jackson P."/>
            <person name="Keim P."/>
            <person name="Longmire J."/>
            <person name="Lucas S."/>
            <person name="Okinaka R."/>
            <person name="Richardson P."/>
            <person name="Rubin E."/>
            <person name="Tice H."/>
        </authorList>
    </citation>
    <scope>NUCLEOTIDE SEQUENCE [LARGE SCALE GENOMIC DNA]</scope>
    <source>
        <strain>Sterne</strain>
    </source>
</reference>
<evidence type="ECO:0000255" key="1">
    <source>
        <dbReference type="HAMAP-Rule" id="MF_00253"/>
    </source>
</evidence>
<gene>
    <name evidence="1" type="primary">glyQS</name>
    <name type="synonym">glyS</name>
    <name type="ordered locus">BA_5147</name>
    <name type="ordered locus">GBAA_5147</name>
    <name type="ordered locus">BAS4784</name>
</gene>
<protein>
    <recommendedName>
        <fullName evidence="1">Glycine--tRNA ligase</fullName>
        <ecNumber evidence="1">6.1.1.14</ecNumber>
    </recommendedName>
    <alternativeName>
        <fullName evidence="1">Glycyl-tRNA synthetase</fullName>
        <shortName evidence="1">GlyRS</shortName>
    </alternativeName>
</protein>
<name>SYG_BACAN</name>
<sequence length="458" mass="53018">MYSMEQVVNLAKHRGFVFPGSEIYGGLANTWDYGPLGIELKNNVKKAWWKKFIQESPYNVGLDAAILMNPKTWIASGHVGNFNDPMIDCKKCKARHRADKLIEDALDAKGIEMVVDGLTFDQMADLMKEHEVKCPDCGSEEFTEIRQFNLMFKTFQGVTESSTNEIFLRPETAQGIFVNFKNVQRSMRKKLPFGIGQIGKSFRNEITPGNFTFRTREFEQMELEFFCKPGEDLEWFAFWRETCKNWLLSLGMTEESMRLRDHGEEELSHYSNATTDIEFKFPFGWGELWGVASRTDFDLKRHMEHSNEDFNYIDPQTNERYVPYCIEPSLGADRVTLAFLCDAYEEEQLENDSRTVLRFHPALAPYKAAILPLSKKLSEGATEVFAELAKDFMVDFDETGSIGKRYRRQDEIGTPFCITYDFDSVEDKAVTVRDRDTMEQVRMPISELKGFLEKKIQF</sequence>
<dbReference type="EC" id="6.1.1.14" evidence="1"/>
<dbReference type="EMBL" id="AE016879">
    <property type="protein sequence ID" value="AAP28819.1"/>
    <property type="molecule type" value="Genomic_DNA"/>
</dbReference>
<dbReference type="EMBL" id="AE017334">
    <property type="protein sequence ID" value="AAT34275.1"/>
    <property type="molecule type" value="Genomic_DNA"/>
</dbReference>
<dbReference type="EMBL" id="AE017225">
    <property type="protein sequence ID" value="AAT57077.1"/>
    <property type="molecule type" value="Genomic_DNA"/>
</dbReference>
<dbReference type="RefSeq" id="NP_847333.1">
    <property type="nucleotide sequence ID" value="NC_003997.3"/>
</dbReference>
<dbReference type="RefSeq" id="WP_000287154.1">
    <property type="nucleotide sequence ID" value="NZ_WXXJ01000017.1"/>
</dbReference>
<dbReference type="RefSeq" id="YP_031027.1">
    <property type="nucleotide sequence ID" value="NC_005945.1"/>
</dbReference>
<dbReference type="SMR" id="Q81XT3"/>
<dbReference type="IntAct" id="Q81XT3">
    <property type="interactions" value="3"/>
</dbReference>
<dbReference type="STRING" id="261594.GBAA_5147"/>
<dbReference type="DNASU" id="1084520"/>
<dbReference type="KEGG" id="ban:BA_5147"/>
<dbReference type="KEGG" id="bar:GBAA_5147"/>
<dbReference type="KEGG" id="bat:BAS4784"/>
<dbReference type="PATRIC" id="fig|198094.11.peg.5108"/>
<dbReference type="eggNOG" id="COG0423">
    <property type="taxonomic scope" value="Bacteria"/>
</dbReference>
<dbReference type="HOGENOM" id="CLU_015515_2_1_9"/>
<dbReference type="OMA" id="MEMQYFV"/>
<dbReference type="OrthoDB" id="9760853at2"/>
<dbReference type="Proteomes" id="UP000000427">
    <property type="component" value="Chromosome"/>
</dbReference>
<dbReference type="Proteomes" id="UP000000594">
    <property type="component" value="Chromosome"/>
</dbReference>
<dbReference type="GO" id="GO:0005737">
    <property type="term" value="C:cytoplasm"/>
    <property type="evidence" value="ECO:0007669"/>
    <property type="project" value="UniProtKB-SubCell"/>
</dbReference>
<dbReference type="GO" id="GO:0005524">
    <property type="term" value="F:ATP binding"/>
    <property type="evidence" value="ECO:0007669"/>
    <property type="project" value="UniProtKB-UniRule"/>
</dbReference>
<dbReference type="GO" id="GO:0140096">
    <property type="term" value="F:catalytic activity, acting on a protein"/>
    <property type="evidence" value="ECO:0007669"/>
    <property type="project" value="UniProtKB-ARBA"/>
</dbReference>
<dbReference type="GO" id="GO:0004820">
    <property type="term" value="F:glycine-tRNA ligase activity"/>
    <property type="evidence" value="ECO:0000250"/>
    <property type="project" value="UniProtKB"/>
</dbReference>
<dbReference type="GO" id="GO:0046983">
    <property type="term" value="F:protein dimerization activity"/>
    <property type="evidence" value="ECO:0000250"/>
    <property type="project" value="UniProtKB"/>
</dbReference>
<dbReference type="GO" id="GO:0016740">
    <property type="term" value="F:transferase activity"/>
    <property type="evidence" value="ECO:0007669"/>
    <property type="project" value="UniProtKB-ARBA"/>
</dbReference>
<dbReference type="GO" id="GO:0006426">
    <property type="term" value="P:glycyl-tRNA aminoacylation"/>
    <property type="evidence" value="ECO:0007669"/>
    <property type="project" value="UniProtKB-UniRule"/>
</dbReference>
<dbReference type="CDD" id="cd00774">
    <property type="entry name" value="GlyRS-like_core"/>
    <property type="match status" value="1"/>
</dbReference>
<dbReference type="CDD" id="cd00858">
    <property type="entry name" value="GlyRS_anticodon"/>
    <property type="match status" value="1"/>
</dbReference>
<dbReference type="FunFam" id="3.30.40.230:FF:000004">
    <property type="entry name" value="Glycine--tRNA ligase"/>
    <property type="match status" value="1"/>
</dbReference>
<dbReference type="FunFam" id="3.40.50.800:FF:000002">
    <property type="entry name" value="Glycine--tRNA ligase"/>
    <property type="match status" value="1"/>
</dbReference>
<dbReference type="Gene3D" id="3.30.40.230">
    <property type="match status" value="1"/>
</dbReference>
<dbReference type="Gene3D" id="3.40.50.800">
    <property type="entry name" value="Anticodon-binding domain"/>
    <property type="match status" value="1"/>
</dbReference>
<dbReference type="Gene3D" id="3.30.930.10">
    <property type="entry name" value="Bira Bifunctional Protein, Domain 2"/>
    <property type="match status" value="1"/>
</dbReference>
<dbReference type="HAMAP" id="MF_00253_B">
    <property type="entry name" value="Gly_tRNA_synth_B"/>
    <property type="match status" value="1"/>
</dbReference>
<dbReference type="InterPro" id="IPR002314">
    <property type="entry name" value="aa-tRNA-synt_IIb"/>
</dbReference>
<dbReference type="InterPro" id="IPR006195">
    <property type="entry name" value="aa-tRNA-synth_II"/>
</dbReference>
<dbReference type="InterPro" id="IPR045864">
    <property type="entry name" value="aa-tRNA-synth_II/BPL/LPL"/>
</dbReference>
<dbReference type="InterPro" id="IPR004154">
    <property type="entry name" value="Anticodon-bd"/>
</dbReference>
<dbReference type="InterPro" id="IPR036621">
    <property type="entry name" value="Anticodon-bd_dom_sf"/>
</dbReference>
<dbReference type="InterPro" id="IPR027031">
    <property type="entry name" value="Gly-tRNA_synthase/POLG2"/>
</dbReference>
<dbReference type="InterPro" id="IPR022961">
    <property type="entry name" value="Gly_tRNA_ligase_bac"/>
</dbReference>
<dbReference type="InterPro" id="IPR033731">
    <property type="entry name" value="GlyRS-like_core"/>
</dbReference>
<dbReference type="InterPro" id="IPR002315">
    <property type="entry name" value="tRNA-synt_gly"/>
</dbReference>
<dbReference type="NCBIfam" id="TIGR00389">
    <property type="entry name" value="glyS_dimeric"/>
    <property type="match status" value="1"/>
</dbReference>
<dbReference type="NCBIfam" id="NF003211">
    <property type="entry name" value="PRK04173.1"/>
    <property type="match status" value="1"/>
</dbReference>
<dbReference type="PANTHER" id="PTHR10745:SF8">
    <property type="entry name" value="DNA POLYMERASE SUBUNIT GAMMA-2, MITOCHONDRIAL"/>
    <property type="match status" value="1"/>
</dbReference>
<dbReference type="PANTHER" id="PTHR10745">
    <property type="entry name" value="GLYCYL-TRNA SYNTHETASE/DNA POLYMERASE SUBUNIT GAMMA-2"/>
    <property type="match status" value="1"/>
</dbReference>
<dbReference type="Pfam" id="PF03129">
    <property type="entry name" value="HGTP_anticodon"/>
    <property type="match status" value="1"/>
</dbReference>
<dbReference type="Pfam" id="PF00587">
    <property type="entry name" value="tRNA-synt_2b"/>
    <property type="match status" value="1"/>
</dbReference>
<dbReference type="PRINTS" id="PR01043">
    <property type="entry name" value="TRNASYNTHGLY"/>
</dbReference>
<dbReference type="SUPFAM" id="SSF52954">
    <property type="entry name" value="Class II aaRS ABD-related"/>
    <property type="match status" value="1"/>
</dbReference>
<dbReference type="SUPFAM" id="SSF55681">
    <property type="entry name" value="Class II aaRS and biotin synthetases"/>
    <property type="match status" value="1"/>
</dbReference>
<dbReference type="PROSITE" id="PS50862">
    <property type="entry name" value="AA_TRNA_LIGASE_II"/>
    <property type="match status" value="1"/>
</dbReference>
<organism>
    <name type="scientific">Bacillus anthracis</name>
    <dbReference type="NCBI Taxonomy" id="1392"/>
    <lineage>
        <taxon>Bacteria</taxon>
        <taxon>Bacillati</taxon>
        <taxon>Bacillota</taxon>
        <taxon>Bacilli</taxon>
        <taxon>Bacillales</taxon>
        <taxon>Bacillaceae</taxon>
        <taxon>Bacillus</taxon>
        <taxon>Bacillus cereus group</taxon>
    </lineage>
</organism>
<feature type="chain" id="PRO_0000072943" description="Glycine--tRNA ligase">
    <location>
        <begin position="1"/>
        <end position="458"/>
    </location>
</feature>
<feature type="binding site" evidence="1">
    <location>
        <position position="97"/>
    </location>
    <ligand>
        <name>substrate</name>
    </ligand>
</feature>
<feature type="binding site" evidence="1">
    <location>
        <position position="171"/>
    </location>
    <ligand>
        <name>substrate</name>
    </ligand>
</feature>
<feature type="binding site" evidence="1">
    <location>
        <begin position="203"/>
        <end position="205"/>
    </location>
    <ligand>
        <name>ATP</name>
        <dbReference type="ChEBI" id="CHEBI:30616"/>
    </ligand>
</feature>
<feature type="binding site" evidence="1">
    <location>
        <begin position="213"/>
        <end position="218"/>
    </location>
    <ligand>
        <name>ATP</name>
        <dbReference type="ChEBI" id="CHEBI:30616"/>
    </ligand>
</feature>
<feature type="binding site" evidence="1">
    <location>
        <begin position="218"/>
        <end position="222"/>
    </location>
    <ligand>
        <name>substrate</name>
    </ligand>
</feature>
<feature type="binding site" evidence="1">
    <location>
        <begin position="287"/>
        <end position="288"/>
    </location>
    <ligand>
        <name>ATP</name>
        <dbReference type="ChEBI" id="CHEBI:30616"/>
    </ligand>
</feature>
<feature type="binding site" evidence="1">
    <location>
        <begin position="327"/>
        <end position="331"/>
    </location>
    <ligand>
        <name>substrate</name>
    </ligand>
</feature>
<feature type="binding site" evidence="1">
    <location>
        <begin position="331"/>
        <end position="334"/>
    </location>
    <ligand>
        <name>ATP</name>
        <dbReference type="ChEBI" id="CHEBI:30616"/>
    </ligand>
</feature>
<proteinExistence type="inferred from homology"/>